<evidence type="ECO:0000255" key="1">
    <source>
        <dbReference type="HAMAP-Rule" id="MF_00017"/>
    </source>
</evidence>
<dbReference type="EMBL" id="CP001649">
    <property type="protein sequence ID" value="ACS80490.1"/>
    <property type="molecule type" value="Genomic_DNA"/>
</dbReference>
<dbReference type="RefSeq" id="WP_015852306.1">
    <property type="nucleotide sequence ID" value="NC_012881.1"/>
</dbReference>
<dbReference type="SMR" id="C6BXI4"/>
<dbReference type="STRING" id="526222.Desal_2434"/>
<dbReference type="KEGG" id="dsa:Desal_2434"/>
<dbReference type="eggNOG" id="COG0353">
    <property type="taxonomic scope" value="Bacteria"/>
</dbReference>
<dbReference type="HOGENOM" id="CLU_060739_1_1_7"/>
<dbReference type="OrthoDB" id="9802672at2"/>
<dbReference type="Proteomes" id="UP000002601">
    <property type="component" value="Chromosome"/>
</dbReference>
<dbReference type="GO" id="GO:0003677">
    <property type="term" value="F:DNA binding"/>
    <property type="evidence" value="ECO:0007669"/>
    <property type="project" value="UniProtKB-UniRule"/>
</dbReference>
<dbReference type="GO" id="GO:0008270">
    <property type="term" value="F:zinc ion binding"/>
    <property type="evidence" value="ECO:0007669"/>
    <property type="project" value="UniProtKB-KW"/>
</dbReference>
<dbReference type="GO" id="GO:0006310">
    <property type="term" value="P:DNA recombination"/>
    <property type="evidence" value="ECO:0007669"/>
    <property type="project" value="UniProtKB-UniRule"/>
</dbReference>
<dbReference type="GO" id="GO:0006281">
    <property type="term" value="P:DNA repair"/>
    <property type="evidence" value="ECO:0007669"/>
    <property type="project" value="UniProtKB-UniRule"/>
</dbReference>
<dbReference type="CDD" id="cd01025">
    <property type="entry name" value="TOPRIM_recR"/>
    <property type="match status" value="1"/>
</dbReference>
<dbReference type="Gene3D" id="3.40.1360.10">
    <property type="match status" value="1"/>
</dbReference>
<dbReference type="Gene3D" id="1.10.8.420">
    <property type="entry name" value="RecR Domain 1"/>
    <property type="match status" value="1"/>
</dbReference>
<dbReference type="HAMAP" id="MF_00017">
    <property type="entry name" value="RecR"/>
    <property type="match status" value="1"/>
</dbReference>
<dbReference type="InterPro" id="IPR000093">
    <property type="entry name" value="DNA_Rcmb_RecR"/>
</dbReference>
<dbReference type="InterPro" id="IPR023627">
    <property type="entry name" value="Rcmb_RecR"/>
</dbReference>
<dbReference type="InterPro" id="IPR006171">
    <property type="entry name" value="TOPRIM_dom"/>
</dbReference>
<dbReference type="InterPro" id="IPR034137">
    <property type="entry name" value="TOPRIM_RecR"/>
</dbReference>
<dbReference type="NCBIfam" id="TIGR00615">
    <property type="entry name" value="recR"/>
    <property type="match status" value="1"/>
</dbReference>
<dbReference type="PANTHER" id="PTHR30446">
    <property type="entry name" value="RECOMBINATION PROTEIN RECR"/>
    <property type="match status" value="1"/>
</dbReference>
<dbReference type="PANTHER" id="PTHR30446:SF0">
    <property type="entry name" value="RECOMBINATION PROTEIN RECR"/>
    <property type="match status" value="1"/>
</dbReference>
<dbReference type="Pfam" id="PF21175">
    <property type="entry name" value="RecR_C"/>
    <property type="match status" value="1"/>
</dbReference>
<dbReference type="Pfam" id="PF21176">
    <property type="entry name" value="RecR_HhH"/>
    <property type="match status" value="1"/>
</dbReference>
<dbReference type="Pfam" id="PF13662">
    <property type="entry name" value="Toprim_4"/>
    <property type="match status" value="1"/>
</dbReference>
<dbReference type="SUPFAM" id="SSF111304">
    <property type="entry name" value="Recombination protein RecR"/>
    <property type="match status" value="1"/>
</dbReference>
<dbReference type="PROSITE" id="PS50880">
    <property type="entry name" value="TOPRIM"/>
    <property type="match status" value="1"/>
</dbReference>
<keyword id="KW-0227">DNA damage</keyword>
<keyword id="KW-0233">DNA recombination</keyword>
<keyword id="KW-0234">DNA repair</keyword>
<keyword id="KW-0479">Metal-binding</keyword>
<keyword id="KW-1185">Reference proteome</keyword>
<keyword id="KW-0862">Zinc</keyword>
<keyword id="KW-0863">Zinc-finger</keyword>
<proteinExistence type="inferred from homology"/>
<reference key="1">
    <citation type="submission" date="2009-06" db="EMBL/GenBank/DDBJ databases">
        <title>Complete sequence of Desulfovibrio salexigens DSM 2638.</title>
        <authorList>
            <consortium name="US DOE Joint Genome Institute"/>
            <person name="Lucas S."/>
            <person name="Copeland A."/>
            <person name="Lapidus A."/>
            <person name="Glavina del Rio T."/>
            <person name="Tice H."/>
            <person name="Bruce D."/>
            <person name="Goodwin L."/>
            <person name="Pitluck S."/>
            <person name="Munk A.C."/>
            <person name="Brettin T."/>
            <person name="Detter J.C."/>
            <person name="Han C."/>
            <person name="Tapia R."/>
            <person name="Larimer F."/>
            <person name="Land M."/>
            <person name="Hauser L."/>
            <person name="Kyrpides N."/>
            <person name="Anderson I."/>
            <person name="Wall J.D."/>
            <person name="Arkin A.P."/>
            <person name="Dehal P."/>
            <person name="Chivian D."/>
            <person name="Giles B."/>
            <person name="Hazen T.C."/>
        </authorList>
    </citation>
    <scope>NUCLEOTIDE SEQUENCE [LARGE SCALE GENOMIC DNA]</scope>
    <source>
        <strain>ATCC 14822 / DSM 2638 / NCIMB 8403 / VKM B-1763</strain>
    </source>
</reference>
<comment type="function">
    <text evidence="1">May play a role in DNA repair. It seems to be involved in an RecBC-independent recombinational process of DNA repair. It may act with RecF and RecO.</text>
</comment>
<comment type="similarity">
    <text evidence="1">Belongs to the RecR family.</text>
</comment>
<sequence>MENLPEPLRVVAQELAKLPGLGPKSALRIALTMLKMPKEKVTGIGQSVIDLREKLCICEQCASITDTCPCRICSDPKREHDKLCLVSEWDSLLAIEEMGLYRGYYLVLGGLLSPLDGVTPQHLEFQKLEERLEKGEVKELILALGATVDAEATASYIKNMVESKYPGIELSRLAQGIPIGSEVKYTDKETLRQSLEYRQKL</sequence>
<organism>
    <name type="scientific">Maridesulfovibrio salexigens (strain ATCC 14822 / DSM 2638 / NCIMB 8403 / VKM B-1763)</name>
    <name type="common">Desulfovibrio salexigens</name>
    <dbReference type="NCBI Taxonomy" id="526222"/>
    <lineage>
        <taxon>Bacteria</taxon>
        <taxon>Pseudomonadati</taxon>
        <taxon>Thermodesulfobacteriota</taxon>
        <taxon>Desulfovibrionia</taxon>
        <taxon>Desulfovibrionales</taxon>
        <taxon>Desulfovibrionaceae</taxon>
        <taxon>Maridesulfovibrio</taxon>
    </lineage>
</organism>
<feature type="chain" id="PRO_1000201856" description="Recombination protein RecR">
    <location>
        <begin position="1"/>
        <end position="201"/>
    </location>
</feature>
<feature type="domain" description="Toprim" evidence="1">
    <location>
        <begin position="81"/>
        <end position="178"/>
    </location>
</feature>
<feature type="zinc finger region" description="C4-type" evidence="1">
    <location>
        <begin position="58"/>
        <end position="73"/>
    </location>
</feature>
<accession>C6BXI4</accession>
<name>RECR_MARSD</name>
<gene>
    <name evidence="1" type="primary">recR</name>
    <name type="ordered locus">Desal_2434</name>
</gene>
<protein>
    <recommendedName>
        <fullName evidence="1">Recombination protein RecR</fullName>
    </recommendedName>
</protein>